<dbReference type="EMBL" id="CP001175">
    <property type="protein sequence ID" value="ACK39115.1"/>
    <property type="molecule type" value="Genomic_DNA"/>
</dbReference>
<dbReference type="RefSeq" id="WP_003720111.1">
    <property type="nucleotide sequence ID" value="NC_011660.1"/>
</dbReference>
<dbReference type="SMR" id="B8DDV6"/>
<dbReference type="GeneID" id="93239707"/>
<dbReference type="KEGG" id="lmh:LMHCC_0761"/>
<dbReference type="HOGENOM" id="CLU_100590_5_0_9"/>
<dbReference type="GO" id="GO:0005737">
    <property type="term" value="C:cytoplasm"/>
    <property type="evidence" value="ECO:0007669"/>
    <property type="project" value="UniProtKB-ARBA"/>
</dbReference>
<dbReference type="GO" id="GO:0015935">
    <property type="term" value="C:small ribosomal subunit"/>
    <property type="evidence" value="ECO:0007669"/>
    <property type="project" value="TreeGrafter"/>
</dbReference>
<dbReference type="GO" id="GO:0003735">
    <property type="term" value="F:structural constituent of ribosome"/>
    <property type="evidence" value="ECO:0007669"/>
    <property type="project" value="InterPro"/>
</dbReference>
<dbReference type="GO" id="GO:0006412">
    <property type="term" value="P:translation"/>
    <property type="evidence" value="ECO:0007669"/>
    <property type="project" value="UniProtKB-UniRule"/>
</dbReference>
<dbReference type="FunFam" id="3.30.1320.10:FF:000002">
    <property type="entry name" value="30S ribosomal protein S16"/>
    <property type="match status" value="1"/>
</dbReference>
<dbReference type="Gene3D" id="3.30.1320.10">
    <property type="match status" value="1"/>
</dbReference>
<dbReference type="HAMAP" id="MF_00385">
    <property type="entry name" value="Ribosomal_bS16"/>
    <property type="match status" value="1"/>
</dbReference>
<dbReference type="InterPro" id="IPR000307">
    <property type="entry name" value="Ribosomal_bS16"/>
</dbReference>
<dbReference type="InterPro" id="IPR023803">
    <property type="entry name" value="Ribosomal_bS16_dom_sf"/>
</dbReference>
<dbReference type="NCBIfam" id="TIGR00002">
    <property type="entry name" value="S16"/>
    <property type="match status" value="1"/>
</dbReference>
<dbReference type="PANTHER" id="PTHR12919">
    <property type="entry name" value="30S RIBOSOMAL PROTEIN S16"/>
    <property type="match status" value="1"/>
</dbReference>
<dbReference type="PANTHER" id="PTHR12919:SF20">
    <property type="entry name" value="SMALL RIBOSOMAL SUBUNIT PROTEIN BS16M"/>
    <property type="match status" value="1"/>
</dbReference>
<dbReference type="Pfam" id="PF00886">
    <property type="entry name" value="Ribosomal_S16"/>
    <property type="match status" value="1"/>
</dbReference>
<dbReference type="SUPFAM" id="SSF54565">
    <property type="entry name" value="Ribosomal protein S16"/>
    <property type="match status" value="1"/>
</dbReference>
<gene>
    <name evidence="1" type="primary">rpsP</name>
    <name type="ordered locus">LMHCC_0761</name>
</gene>
<reference key="1">
    <citation type="journal article" date="2011" name="J. Bacteriol.">
        <title>Genome sequence of lineage III Listeria monocytogenes strain HCC23.</title>
        <authorList>
            <person name="Steele C.L."/>
            <person name="Donaldson J.R."/>
            <person name="Paul D."/>
            <person name="Banes M.M."/>
            <person name="Arick T."/>
            <person name="Bridges S.M."/>
            <person name="Lawrence M.L."/>
        </authorList>
    </citation>
    <scope>NUCLEOTIDE SEQUENCE [LARGE SCALE GENOMIC DNA]</scope>
    <source>
        <strain>HCC23</strain>
    </source>
</reference>
<protein>
    <recommendedName>
        <fullName evidence="1">Small ribosomal subunit protein bS16</fullName>
    </recommendedName>
    <alternativeName>
        <fullName evidence="2">30S ribosomal protein S16</fullName>
    </alternativeName>
</protein>
<feature type="chain" id="PRO_1000196428" description="Small ribosomal subunit protein bS16">
    <location>
        <begin position="1"/>
        <end position="90"/>
    </location>
</feature>
<proteinExistence type="inferred from homology"/>
<comment type="similarity">
    <text evidence="1">Belongs to the bacterial ribosomal protein bS16 family.</text>
</comment>
<accession>B8DDV6</accession>
<name>RS16_LISMH</name>
<sequence>MAVKIRLKRIGSKKKPFYRIVVADSRFPRDGRSIETIGTYNPLLDPVEVKIDEEATLKWMHNGAKPSDTVRNLLSREGIMEKFHNQKLGK</sequence>
<keyword id="KW-0687">Ribonucleoprotein</keyword>
<keyword id="KW-0689">Ribosomal protein</keyword>
<organism>
    <name type="scientific">Listeria monocytogenes serotype 4a (strain HCC23)</name>
    <dbReference type="NCBI Taxonomy" id="552536"/>
    <lineage>
        <taxon>Bacteria</taxon>
        <taxon>Bacillati</taxon>
        <taxon>Bacillota</taxon>
        <taxon>Bacilli</taxon>
        <taxon>Bacillales</taxon>
        <taxon>Listeriaceae</taxon>
        <taxon>Listeria</taxon>
    </lineage>
</organism>
<evidence type="ECO:0000255" key="1">
    <source>
        <dbReference type="HAMAP-Rule" id="MF_00385"/>
    </source>
</evidence>
<evidence type="ECO:0000305" key="2"/>